<comment type="similarity">
    <text evidence="3">Belongs to the AB hydrolase superfamily. Bacterial non-heme haloperoxidase / perhydrolase family.</text>
</comment>
<organism>
    <name type="scientific">Rhodococcus erythropolis</name>
    <name type="common">Arthrobacter picolinophilus</name>
    <dbReference type="NCBI Taxonomy" id="1833"/>
    <lineage>
        <taxon>Bacteria</taxon>
        <taxon>Bacillati</taxon>
        <taxon>Actinomycetota</taxon>
        <taxon>Actinomycetes</taxon>
        <taxon>Mycobacteriales</taxon>
        <taxon>Nocardiaceae</taxon>
        <taxon>Rhodococcus</taxon>
        <taxon>Rhodococcus erythropolis group</taxon>
    </lineage>
</organism>
<dbReference type="EC" id="1.11.1.-"/>
<dbReference type="EMBL" id="U95170">
    <property type="protein sequence ID" value="AAC45285.1"/>
    <property type="molecule type" value="Genomic_DNA"/>
</dbReference>
<dbReference type="RefSeq" id="WP_007732512.1">
    <property type="nucleotide sequence ID" value="NZ_CP176579.1"/>
</dbReference>
<dbReference type="SMR" id="O05691"/>
<dbReference type="ESTHER" id="rhoer-thcf">
    <property type="family name" value="Haloperoxidase"/>
</dbReference>
<dbReference type="PeroxiBase" id="5913">
    <property type="entry name" value="RerHalNPrx"/>
</dbReference>
<dbReference type="GO" id="GO:0004601">
    <property type="term" value="F:peroxidase activity"/>
    <property type="evidence" value="ECO:0007669"/>
    <property type="project" value="UniProtKB-KW"/>
</dbReference>
<dbReference type="FunFam" id="3.40.50.1820:FF:000205">
    <property type="entry name" value="Non-haem bromoperoxidase BPO-A2"/>
    <property type="match status" value="1"/>
</dbReference>
<dbReference type="Gene3D" id="3.40.50.1820">
    <property type="entry name" value="alpha/beta hydrolase"/>
    <property type="match status" value="1"/>
</dbReference>
<dbReference type="InterPro" id="IPR050471">
    <property type="entry name" value="AB_hydrolase"/>
</dbReference>
<dbReference type="InterPro" id="IPR000073">
    <property type="entry name" value="AB_hydrolase_1"/>
</dbReference>
<dbReference type="InterPro" id="IPR029058">
    <property type="entry name" value="AB_hydrolase_fold"/>
</dbReference>
<dbReference type="InterPro" id="IPR000639">
    <property type="entry name" value="Epox_hydrolase-like"/>
</dbReference>
<dbReference type="PANTHER" id="PTHR43433">
    <property type="entry name" value="HYDROLASE, ALPHA/BETA FOLD FAMILY PROTEIN"/>
    <property type="match status" value="1"/>
</dbReference>
<dbReference type="PANTHER" id="PTHR43433:SF3">
    <property type="entry name" value="NON-HEME CHLOROPEROXIDASE"/>
    <property type="match status" value="1"/>
</dbReference>
<dbReference type="Pfam" id="PF00561">
    <property type="entry name" value="Abhydrolase_1"/>
    <property type="match status" value="1"/>
</dbReference>
<dbReference type="PRINTS" id="PR00111">
    <property type="entry name" value="ABHYDROLASE"/>
</dbReference>
<dbReference type="PRINTS" id="PR00412">
    <property type="entry name" value="EPOXHYDRLASE"/>
</dbReference>
<dbReference type="SUPFAM" id="SSF53474">
    <property type="entry name" value="alpha/beta-Hydrolases"/>
    <property type="match status" value="1"/>
</dbReference>
<sequence length="274" mass="29795">MPFVTASDGTEIFYKDWGSGRPIMFHHGWPLSSDDWDSQLLFLVQRGYRVIAHDRRGHGRSAQVGHGHDMDHYAADAAAVVAHLGLRDVVHVGHSTGGGEVARYVARHGAGRVAKAVLIGAVPPLMVQTESNPEGLPVEVFDGFREAVVTNRSQFYLDLASGPFYGFNRPGADISQGVIQNWWRQGMTGSAQAHYEGIKAFSETDFTDDLRAIDVPTLIMHGDDDQIVPIANSAETAVTLVKNARLKVYPGLSHGMCTVNADTVNADLLSFIES</sequence>
<evidence type="ECO:0000250" key="1">
    <source>
        <dbReference type="UniProtKB" id="P22862"/>
    </source>
</evidence>
<evidence type="ECO:0000255" key="2"/>
<evidence type="ECO:0000305" key="3"/>
<feature type="chain" id="PRO_0000207065" description="Non-heme haloperoxidase">
    <location>
        <begin position="1"/>
        <end position="274"/>
    </location>
</feature>
<feature type="domain" description="AB hydrolase-1" evidence="2">
    <location>
        <begin position="22"/>
        <end position="254"/>
    </location>
</feature>
<feature type="active site" evidence="1">
    <location>
        <position position="95"/>
    </location>
</feature>
<feature type="active site" evidence="1">
    <location>
        <position position="225"/>
    </location>
</feature>
<feature type="active site" evidence="1">
    <location>
        <position position="254"/>
    </location>
</feature>
<protein>
    <recommendedName>
        <fullName>Non-heme haloperoxidase</fullName>
        <ecNumber>1.11.1.-</ecNumber>
    </recommendedName>
</protein>
<proteinExistence type="inferred from homology"/>
<accession>O05691</accession>
<reference key="1">
    <citation type="journal article" date="1997" name="Appl. Environ. Microbiol.">
        <title>Thiocarbamate herbicide-inducible nonheme haloperoxidase of Rhodococcus erythropolis NI86/21.</title>
        <authorList>
            <person name="de Schrijver A."/>
            <person name="Nagy I."/>
            <person name="Schoofs G."/>
            <person name="Proost P."/>
            <person name="Vanderleyden J."/>
            <person name="van Pee K.-H."/>
            <person name="de Mot R."/>
        </authorList>
    </citation>
    <scope>NUCLEOTIDE SEQUENCE [GENOMIC DNA]</scope>
    <source>
        <strain>NI86/21</strain>
    </source>
</reference>
<gene>
    <name type="primary">thcF</name>
</gene>
<name>THCF_RHOER</name>
<keyword id="KW-0560">Oxidoreductase</keyword>
<keyword id="KW-0575">Peroxidase</keyword>